<sequence length="194" mass="22721">MNIVILLLILTFSIKHSNTYKLKNTYIPINYMYHNNKNILRSQKSKLFLNFLSNNQLANSNKQTCFFKSNIKSSISNIDNYDYIRKRYINTSNKNKLFYNITLRTNDGEKKIECNEDEYILDASERQNVELPYSCRGGSCSTCAAKLVEGEVDNDDQSYLDEEQIKKKYILLCTCYPKSDCVIETHKEDELHDM</sequence>
<evidence type="ECO:0000255" key="1"/>
<evidence type="ECO:0000255" key="2">
    <source>
        <dbReference type="PROSITE-ProRule" id="PRU00465"/>
    </source>
</evidence>
<evidence type="ECO:0000269" key="3">
    <source>
    </source>
</evidence>
<evidence type="ECO:0000269" key="4">
    <source>
    </source>
</evidence>
<evidence type="ECO:0000303" key="5">
    <source>
    </source>
</evidence>
<evidence type="ECO:0000303" key="6">
    <source>
    </source>
</evidence>
<evidence type="ECO:0000305" key="7"/>
<evidence type="ECO:0000305" key="8">
    <source>
    </source>
</evidence>
<evidence type="ECO:0000312" key="9">
    <source>
        <dbReference type="EMBL" id="CAD52325.1"/>
    </source>
</evidence>
<evidence type="ECO:0007744" key="10">
    <source>
        <dbReference type="PDB" id="1IUE"/>
    </source>
</evidence>
<evidence type="ECO:0007829" key="11">
    <source>
        <dbReference type="PDB" id="1IUE"/>
    </source>
</evidence>
<proteinExistence type="evidence at protein level"/>
<reference key="1">
    <citation type="journal article" date="2002" name="Nature">
        <title>Genome sequence of the human malaria parasite Plasmodium falciparum.</title>
        <authorList>
            <person name="Gardner M.J."/>
            <person name="Hall N."/>
            <person name="Fung E."/>
            <person name="White O."/>
            <person name="Berriman M."/>
            <person name="Hyman R.W."/>
            <person name="Carlton J.M."/>
            <person name="Pain A."/>
            <person name="Nelson K.E."/>
            <person name="Bowman S."/>
            <person name="Paulsen I.T."/>
            <person name="James K.D."/>
            <person name="Eisen J.A."/>
            <person name="Rutherford K.M."/>
            <person name="Salzberg S.L."/>
            <person name="Craig A."/>
            <person name="Kyes S."/>
            <person name="Chan M.-S."/>
            <person name="Nene V."/>
            <person name="Shallom S.J."/>
            <person name="Suh B."/>
            <person name="Peterson J."/>
            <person name="Angiuoli S."/>
            <person name="Pertea M."/>
            <person name="Allen J."/>
            <person name="Selengut J."/>
            <person name="Haft D."/>
            <person name="Mather M.W."/>
            <person name="Vaidya A.B."/>
            <person name="Martin D.M.A."/>
            <person name="Fairlamb A.H."/>
            <person name="Fraunholz M.J."/>
            <person name="Roos D.S."/>
            <person name="Ralph S.A."/>
            <person name="McFadden G.I."/>
            <person name="Cummings L.M."/>
            <person name="Subramanian G.M."/>
            <person name="Mungall C."/>
            <person name="Venter J.C."/>
            <person name="Carucci D.J."/>
            <person name="Hoffman S.L."/>
            <person name="Newbold C."/>
            <person name="Davis R.W."/>
            <person name="Fraser C.M."/>
            <person name="Barrell B.G."/>
        </authorList>
    </citation>
    <scope>NUCLEOTIDE SEQUENCE [LARGE SCALE GENOMIC DNA]</scope>
    <source>
        <strain>3D7</strain>
    </source>
</reference>
<reference key="2">
    <citation type="journal article" date="2002" name="Nature">
        <title>Sequence of Plasmodium falciparum chromosomes 1, 3-9 and 13.</title>
        <authorList>
            <person name="Hall N."/>
            <person name="Pain A."/>
            <person name="Berriman M."/>
            <person name="Churcher C.M."/>
            <person name="Harris B."/>
            <person name="Harris D."/>
            <person name="Mungall K.L."/>
            <person name="Bowman S."/>
            <person name="Atkin R."/>
            <person name="Baker S."/>
            <person name="Barron A."/>
            <person name="Brooks K."/>
            <person name="Buckee C.O."/>
            <person name="Burrows C."/>
            <person name="Cherevach I."/>
            <person name="Chillingworth C."/>
            <person name="Chillingworth T."/>
            <person name="Christodoulou Z."/>
            <person name="Clark L."/>
            <person name="Clark R."/>
            <person name="Corton C."/>
            <person name="Cronin A."/>
            <person name="Davies R.M."/>
            <person name="Davis P."/>
            <person name="Dear P."/>
            <person name="Dearden F."/>
            <person name="Doggett J."/>
            <person name="Feltwell T."/>
            <person name="Goble A."/>
            <person name="Goodhead I."/>
            <person name="Gwilliam R."/>
            <person name="Hamlin N."/>
            <person name="Hance Z."/>
            <person name="Harper D."/>
            <person name="Hauser H."/>
            <person name="Hornsby T."/>
            <person name="Holroyd S."/>
            <person name="Horrocks P."/>
            <person name="Humphray S."/>
            <person name="Jagels K."/>
            <person name="James K.D."/>
            <person name="Johnson D."/>
            <person name="Kerhornou A."/>
            <person name="Knights A."/>
            <person name="Konfortov B."/>
            <person name="Kyes S."/>
            <person name="Larke N."/>
            <person name="Lawson D."/>
            <person name="Lennard N."/>
            <person name="Line A."/>
            <person name="Maddison M."/>
            <person name="Mclean J."/>
            <person name="Mooney P."/>
            <person name="Moule S."/>
            <person name="Murphy L."/>
            <person name="Oliver K."/>
            <person name="Ormond D."/>
            <person name="Price C."/>
            <person name="Quail M.A."/>
            <person name="Rabbinowitsch E."/>
            <person name="Rajandream M.A."/>
            <person name="Rutter S."/>
            <person name="Rutherford K.M."/>
            <person name="Sanders M."/>
            <person name="Simmonds M."/>
            <person name="Seeger K."/>
            <person name="Sharp S."/>
            <person name="Smith R."/>
            <person name="Squares R."/>
            <person name="Squares S."/>
            <person name="Stevens K."/>
            <person name="Taylor K."/>
            <person name="Tivey A."/>
            <person name="Unwin L."/>
            <person name="Whitehead S."/>
            <person name="Woodward J.R."/>
            <person name="Sulston J.E."/>
            <person name="Craig A."/>
            <person name="Newbold C."/>
            <person name="Barrell B.G."/>
        </authorList>
    </citation>
    <scope>NUCLEOTIDE SEQUENCE [LARGE SCALE GENOMIC DNA]</scope>
    <source>
        <strain>3D7</strain>
    </source>
</reference>
<reference key="3">
    <citation type="journal article" date="2005" name="FEBS Lett.">
        <title>Reconstitution of an apicoplast-localised electron transfer pathway involved in the isoprenoid biosynthesis of Plasmodium falciparum.</title>
        <authorList>
            <person name="Roehrich R.C."/>
            <person name="Englert N."/>
            <person name="Troschke K."/>
            <person name="Reichenberg A."/>
            <person name="Hintz M."/>
            <person name="Seeber F."/>
            <person name="Balconi E."/>
            <person name="Aliverti A."/>
            <person name="Zanetti G."/>
            <person name="Koehler U."/>
            <person name="Pfeiffer M."/>
            <person name="Beck E."/>
            <person name="Jomaa H."/>
            <person name="Wiesner J."/>
        </authorList>
    </citation>
    <scope>FUNCTION</scope>
    <scope>INTERACTION WITH LYTB</scope>
</reference>
<reference evidence="10" key="4">
    <citation type="journal article" date="2007" name="J. Biochem.">
        <title>Cloning and characterization of ferredoxin and ferredoxin-NADP+ reductase from human malaria parasite.</title>
        <authorList>
            <person name="Kimata-Ariga Y."/>
            <person name="Kurisu G."/>
            <person name="Kusunoki M."/>
            <person name="Aoki S."/>
            <person name="Sato D."/>
            <person name="Kobayashi T."/>
            <person name="Kita K."/>
            <person name="Horii T."/>
            <person name="Hase T."/>
        </authorList>
    </citation>
    <scope>X-RAY CRYSTALLOGRAPHY (1.70 ANGSTROMS) OF 98-194 IN COMPLEX WITH 2FE-2S IRON-SULFUR CLUSTER</scope>
    <scope>BIOPHYSICOCHEMICAL PROPERTIES</scope>
    <scope>COFACTOR</scope>
    <scope>SUBCELLULAR LOCATION</scope>
    <scope>DEVELOPMENTAL STAGE</scope>
</reference>
<keyword id="KW-0001">2Fe-2S</keyword>
<keyword id="KW-0002">3D-structure</keyword>
<keyword id="KW-0933">Apicoplast</keyword>
<keyword id="KW-0249">Electron transport</keyword>
<keyword id="KW-0408">Iron</keyword>
<keyword id="KW-0411">Iron-sulfur</keyword>
<keyword id="KW-0479">Metal-binding</keyword>
<keyword id="KW-0934">Plastid</keyword>
<keyword id="KW-1185">Reference proteome</keyword>
<keyword id="KW-0809">Transit peptide</keyword>
<keyword id="KW-0813">Transport</keyword>
<organism evidence="9">
    <name type="scientific">Plasmodium falciparum (isolate 3D7)</name>
    <dbReference type="NCBI Taxonomy" id="36329"/>
    <lineage>
        <taxon>Eukaryota</taxon>
        <taxon>Sar</taxon>
        <taxon>Alveolata</taxon>
        <taxon>Apicomplexa</taxon>
        <taxon>Aconoidasida</taxon>
        <taxon>Haemosporida</taxon>
        <taxon>Plasmodiidae</taxon>
        <taxon>Plasmodium</taxon>
        <taxon>Plasmodium (Laverania)</taxon>
    </lineage>
</organism>
<gene>
    <name evidence="5" type="primary">FD</name>
    <name evidence="9" type="ORF">PF3D7_1318100</name>
</gene>
<accession>Q8IED5</accession>
<dbReference type="EMBL" id="AL844509">
    <property type="protein sequence ID" value="CAD52325.1"/>
    <property type="molecule type" value="Genomic_DNA"/>
</dbReference>
<dbReference type="RefSeq" id="XP_001349917.1">
    <property type="nucleotide sequence ID" value="XM_001349881.1"/>
</dbReference>
<dbReference type="PDB" id="1IUE">
    <property type="method" value="X-ray"/>
    <property type="resolution" value="1.70 A"/>
    <property type="chains" value="A/B=98-194"/>
</dbReference>
<dbReference type="PDBsum" id="1IUE"/>
<dbReference type="SMR" id="Q8IED5"/>
<dbReference type="FunCoup" id="Q8IED5">
    <property type="interactions" value="1"/>
</dbReference>
<dbReference type="IntAct" id="Q8IED5">
    <property type="interactions" value="2"/>
</dbReference>
<dbReference type="MINT" id="Q8IED5"/>
<dbReference type="STRING" id="36329.Q8IED5"/>
<dbReference type="PaxDb" id="5833-MAL13P1.95"/>
<dbReference type="EnsemblProtists" id="CAD52325">
    <property type="protein sequence ID" value="CAD52325"/>
    <property type="gene ID" value="PF3D7_1318100"/>
</dbReference>
<dbReference type="GeneID" id="813986"/>
<dbReference type="KEGG" id="pfa:PF3D7_1318100"/>
<dbReference type="VEuPathDB" id="PlasmoDB:PF3D7_1318100"/>
<dbReference type="HOGENOM" id="CLU_082632_1_2_1"/>
<dbReference type="InParanoid" id="Q8IED5"/>
<dbReference type="OMA" id="RNKLFYN"/>
<dbReference type="OrthoDB" id="1885901at2759"/>
<dbReference type="PhylomeDB" id="Q8IED5"/>
<dbReference type="EvolutionaryTrace" id="Q8IED5"/>
<dbReference type="Proteomes" id="UP000001450">
    <property type="component" value="Chromosome 13"/>
</dbReference>
<dbReference type="GO" id="GO:0020011">
    <property type="term" value="C:apicoplast"/>
    <property type="evidence" value="ECO:0000314"/>
    <property type="project" value="UniProtKB"/>
</dbReference>
<dbReference type="GO" id="GO:0051537">
    <property type="term" value="F:2 iron, 2 sulfur cluster binding"/>
    <property type="evidence" value="ECO:0000314"/>
    <property type="project" value="UniProtKB"/>
</dbReference>
<dbReference type="GO" id="GO:0009055">
    <property type="term" value="F:electron transfer activity"/>
    <property type="evidence" value="ECO:0000250"/>
    <property type="project" value="GeneDB"/>
</dbReference>
<dbReference type="GO" id="GO:0046872">
    <property type="term" value="F:metal ion binding"/>
    <property type="evidence" value="ECO:0007669"/>
    <property type="project" value="UniProtKB-KW"/>
</dbReference>
<dbReference type="GO" id="GO:0022900">
    <property type="term" value="P:electron transport chain"/>
    <property type="evidence" value="ECO:0007669"/>
    <property type="project" value="InterPro"/>
</dbReference>
<dbReference type="CDD" id="cd00207">
    <property type="entry name" value="fer2"/>
    <property type="match status" value="1"/>
</dbReference>
<dbReference type="FunFam" id="3.10.20.30:FF:000014">
    <property type="entry name" value="Ferredoxin"/>
    <property type="match status" value="1"/>
</dbReference>
<dbReference type="Gene3D" id="3.10.20.30">
    <property type="match status" value="1"/>
</dbReference>
<dbReference type="InterPro" id="IPR036010">
    <property type="entry name" value="2Fe-2S_ferredoxin-like_sf"/>
</dbReference>
<dbReference type="InterPro" id="IPR001041">
    <property type="entry name" value="2Fe-2S_ferredoxin-type"/>
</dbReference>
<dbReference type="InterPro" id="IPR006058">
    <property type="entry name" value="2Fe2S_fd_BS"/>
</dbReference>
<dbReference type="InterPro" id="IPR012675">
    <property type="entry name" value="Beta-grasp_dom_sf"/>
</dbReference>
<dbReference type="InterPro" id="IPR010241">
    <property type="entry name" value="Fd_pln"/>
</dbReference>
<dbReference type="NCBIfam" id="TIGR02008">
    <property type="entry name" value="fdx_plant"/>
    <property type="match status" value="1"/>
</dbReference>
<dbReference type="PANTHER" id="PTHR43112">
    <property type="entry name" value="FERREDOXIN"/>
    <property type="match status" value="1"/>
</dbReference>
<dbReference type="PANTHER" id="PTHR43112:SF3">
    <property type="entry name" value="FERREDOXIN-2, CHLOROPLASTIC"/>
    <property type="match status" value="1"/>
</dbReference>
<dbReference type="Pfam" id="PF00111">
    <property type="entry name" value="Fer2"/>
    <property type="match status" value="1"/>
</dbReference>
<dbReference type="SUPFAM" id="SSF54292">
    <property type="entry name" value="2Fe-2S ferredoxin-like"/>
    <property type="match status" value="1"/>
</dbReference>
<dbReference type="PROSITE" id="PS00197">
    <property type="entry name" value="2FE2S_FER_1"/>
    <property type="match status" value="1"/>
</dbReference>
<dbReference type="PROSITE" id="PS51085">
    <property type="entry name" value="2FE2S_FER_2"/>
    <property type="match status" value="1"/>
</dbReference>
<feature type="transit peptide" description="Apicoplast" evidence="1">
    <location>
        <begin position="1"/>
        <end position="19"/>
    </location>
</feature>
<feature type="chain" id="PRO_5004311090" description="Ferredoxin, apicoplast">
    <location>
        <begin position="20"/>
        <end position="194"/>
    </location>
</feature>
<feature type="domain" description="2Fe-2S ferredoxin-type" evidence="2">
    <location>
        <begin position="99"/>
        <end position="189"/>
    </location>
</feature>
<feature type="binding site" evidence="2 4 10">
    <location>
        <position position="135"/>
    </location>
    <ligand>
        <name>[2Fe-2S] cluster</name>
        <dbReference type="ChEBI" id="CHEBI:190135"/>
    </ligand>
</feature>
<feature type="binding site" evidence="2 4 10">
    <location>
        <position position="140"/>
    </location>
    <ligand>
        <name>[2Fe-2S] cluster</name>
        <dbReference type="ChEBI" id="CHEBI:190135"/>
    </ligand>
</feature>
<feature type="binding site" evidence="2 4 10">
    <location>
        <position position="143"/>
    </location>
    <ligand>
        <name>[2Fe-2S] cluster</name>
        <dbReference type="ChEBI" id="CHEBI:190135"/>
    </ligand>
</feature>
<feature type="binding site" evidence="2 4 10">
    <location>
        <position position="173"/>
    </location>
    <ligand>
        <name>[2Fe-2S] cluster</name>
        <dbReference type="ChEBI" id="CHEBI:190135"/>
    </ligand>
</feature>
<feature type="strand" evidence="11">
    <location>
        <begin position="98"/>
        <end position="105"/>
    </location>
</feature>
<feature type="strand" evidence="11">
    <location>
        <begin position="108"/>
        <end position="115"/>
    </location>
</feature>
<feature type="helix" evidence="11">
    <location>
        <begin position="120"/>
        <end position="126"/>
    </location>
</feature>
<feature type="strand" evidence="11">
    <location>
        <begin position="137"/>
        <end position="141"/>
    </location>
</feature>
<feature type="strand" evidence="11">
    <location>
        <begin position="144"/>
        <end position="150"/>
    </location>
</feature>
<feature type="helix" evidence="11">
    <location>
        <begin position="162"/>
        <end position="166"/>
    </location>
</feature>
<feature type="strand" evidence="11">
    <location>
        <begin position="169"/>
        <end position="171"/>
    </location>
</feature>
<feature type="helix" evidence="11">
    <location>
        <begin position="172"/>
        <end position="174"/>
    </location>
</feature>
<feature type="strand" evidence="11">
    <location>
        <begin position="176"/>
        <end position="179"/>
    </location>
</feature>
<feature type="strand" evidence="11">
    <location>
        <begin position="181"/>
        <end position="184"/>
    </location>
</feature>
<feature type="helix" evidence="11">
    <location>
        <begin position="188"/>
        <end position="192"/>
    </location>
</feature>
<protein>
    <recommendedName>
        <fullName evidence="6">Ferredoxin, apicoplast</fullName>
    </recommendedName>
</protein>
<name>FER_PLAF7</name>
<comment type="function">
    <text evidence="3">Ferredoxins are iron-sulfur proteins that transfer electrons in a wide variety of metabolic reactions (PubMed:16289098). By transferring electrons to 4-hydroxy-3-methylbut-2-enyl diphosphate reductase LytB/IspH, plays a role in the terminal step of the DOXP/MEP pathway for isoprenoid precursor biosynthesis (PubMed:16289098).</text>
</comment>
<comment type="cofactor">
    <cofactor evidence="2 4">
        <name>[2Fe-2S] cluster</name>
        <dbReference type="ChEBI" id="CHEBI:190135"/>
    </cofactor>
    <text evidence="2 4">Binds 1 2Fe-2S cluster.</text>
</comment>
<comment type="biophysicochemical properties">
    <redoxPotential>
        <text evidence="4">E(0) is -266 mV.</text>
    </redoxPotential>
</comment>
<comment type="interaction">
    <interactant intactId="EBI-7046314">
        <id>Q8IED5</id>
    </interactant>
    <interactant intactId="EBI-7046197">
        <id>C6KT68</id>
        <label>FNR</label>
    </interactant>
    <organismsDiffer>false</organismsDiffer>
    <experiments>3</experiments>
</comment>
<comment type="subcellular location">
    <subcellularLocation>
        <location evidence="8">Plastid</location>
        <location evidence="8">Apicoplast</location>
    </subcellularLocation>
</comment>
<comment type="developmental stage">
    <text evidence="4">Detected in trophozoite and schizont stages (at protein level).</text>
</comment>
<comment type="similarity">
    <text evidence="7">Belongs to the 2Fe2S plant-type ferredoxin family.</text>
</comment>